<comment type="catalytic activity">
    <reaction evidence="1">
        <text>L-citrulline + L-aspartate + ATP = 2-(N(omega)-L-arginino)succinate + AMP + diphosphate + H(+)</text>
        <dbReference type="Rhea" id="RHEA:10932"/>
        <dbReference type="ChEBI" id="CHEBI:15378"/>
        <dbReference type="ChEBI" id="CHEBI:29991"/>
        <dbReference type="ChEBI" id="CHEBI:30616"/>
        <dbReference type="ChEBI" id="CHEBI:33019"/>
        <dbReference type="ChEBI" id="CHEBI:57472"/>
        <dbReference type="ChEBI" id="CHEBI:57743"/>
        <dbReference type="ChEBI" id="CHEBI:456215"/>
        <dbReference type="EC" id="6.3.4.5"/>
    </reaction>
</comment>
<comment type="pathway">
    <text evidence="1">Amino-acid biosynthesis; L-arginine biosynthesis; L-arginine from L-ornithine and carbamoyl phosphate: step 2/3.</text>
</comment>
<comment type="subunit">
    <text evidence="1">Homotetramer.</text>
</comment>
<comment type="subcellular location">
    <subcellularLocation>
        <location evidence="1">Cytoplasm</location>
    </subcellularLocation>
</comment>
<comment type="similarity">
    <text evidence="1">Belongs to the argininosuccinate synthase family. Type 1 subfamily.</text>
</comment>
<proteinExistence type="inferred from homology"/>
<name>ASSY_BACMK</name>
<sequence>MEKKKVVLAYSGGLDTSVAIKWLQEKNYDIIALCLDLGEGKDLAFVKEKALSVGAIKSYMIDVQEEYANEYALIAMQAHTLYEGKYPLVSALSRPLIAKKLVEIAEQEGASAVAHGCTGKGNDQVRFEVSIQALNPYLEVIAPVREWKWSREEEIAYAKENDIPIPINLDSPFSIDQNLWGRSNECGILEDPWAAPPEEAYEMTLALEDTPNKPEFVEIGFEAGVPTTLNGTAYSLSELIKTLNALAGKHGVGRIDHVENRLVGIKSREVYECPAAMTLITAHKELEDLTLVKEVAHFKPMIEQKLTELIYNGLWFSPLKQALNAFLQETQKNVTGTVRVKLFKGHAIVEGRKSEYSLYDEKLATYTAQDEFNHDAAVGFISLFGLPTKVYSQVNQKKVEA</sequence>
<dbReference type="EC" id="6.3.4.5" evidence="1"/>
<dbReference type="EMBL" id="CP000903">
    <property type="protein sequence ID" value="ABY45618.1"/>
    <property type="molecule type" value="Genomic_DNA"/>
</dbReference>
<dbReference type="RefSeq" id="WP_002129394.1">
    <property type="nucleotide sequence ID" value="NC_010184.1"/>
</dbReference>
<dbReference type="SMR" id="A9VKE1"/>
<dbReference type="KEGG" id="bwe:BcerKBAB4_4460"/>
<dbReference type="eggNOG" id="COG0137">
    <property type="taxonomic scope" value="Bacteria"/>
</dbReference>
<dbReference type="HOGENOM" id="CLU_032784_4_2_9"/>
<dbReference type="UniPathway" id="UPA00068">
    <property type="reaction ID" value="UER00113"/>
</dbReference>
<dbReference type="Proteomes" id="UP000002154">
    <property type="component" value="Chromosome"/>
</dbReference>
<dbReference type="GO" id="GO:0005737">
    <property type="term" value="C:cytoplasm"/>
    <property type="evidence" value="ECO:0007669"/>
    <property type="project" value="UniProtKB-SubCell"/>
</dbReference>
<dbReference type="GO" id="GO:0004055">
    <property type="term" value="F:argininosuccinate synthase activity"/>
    <property type="evidence" value="ECO:0007669"/>
    <property type="project" value="UniProtKB-UniRule"/>
</dbReference>
<dbReference type="GO" id="GO:0005524">
    <property type="term" value="F:ATP binding"/>
    <property type="evidence" value="ECO:0007669"/>
    <property type="project" value="UniProtKB-UniRule"/>
</dbReference>
<dbReference type="GO" id="GO:0000053">
    <property type="term" value="P:argininosuccinate metabolic process"/>
    <property type="evidence" value="ECO:0007669"/>
    <property type="project" value="TreeGrafter"/>
</dbReference>
<dbReference type="GO" id="GO:0006526">
    <property type="term" value="P:L-arginine biosynthetic process"/>
    <property type="evidence" value="ECO:0007669"/>
    <property type="project" value="UniProtKB-UniRule"/>
</dbReference>
<dbReference type="GO" id="GO:0000050">
    <property type="term" value="P:urea cycle"/>
    <property type="evidence" value="ECO:0007669"/>
    <property type="project" value="TreeGrafter"/>
</dbReference>
<dbReference type="CDD" id="cd01999">
    <property type="entry name" value="ASS"/>
    <property type="match status" value="1"/>
</dbReference>
<dbReference type="FunFam" id="1.20.5.470:FF:000002">
    <property type="entry name" value="Argininosuccinate synthase"/>
    <property type="match status" value="1"/>
</dbReference>
<dbReference type="FunFam" id="3.40.50.620:FF:000038">
    <property type="entry name" value="Argininosuccinate synthase"/>
    <property type="match status" value="1"/>
</dbReference>
<dbReference type="FunFam" id="3.90.1260.10:FF:000007">
    <property type="entry name" value="Argininosuccinate synthase"/>
    <property type="match status" value="1"/>
</dbReference>
<dbReference type="Gene3D" id="3.90.1260.10">
    <property type="entry name" value="Argininosuccinate synthetase, chain A, domain 2"/>
    <property type="match status" value="1"/>
</dbReference>
<dbReference type="Gene3D" id="3.40.50.620">
    <property type="entry name" value="HUPs"/>
    <property type="match status" value="1"/>
</dbReference>
<dbReference type="Gene3D" id="1.20.5.470">
    <property type="entry name" value="Single helix bin"/>
    <property type="match status" value="1"/>
</dbReference>
<dbReference type="HAMAP" id="MF_00005">
    <property type="entry name" value="Arg_succ_synth_type1"/>
    <property type="match status" value="1"/>
</dbReference>
<dbReference type="InterPro" id="IPR048268">
    <property type="entry name" value="Arginosuc_syn_C"/>
</dbReference>
<dbReference type="InterPro" id="IPR048267">
    <property type="entry name" value="Arginosuc_syn_N"/>
</dbReference>
<dbReference type="InterPro" id="IPR001518">
    <property type="entry name" value="Arginosuc_synth"/>
</dbReference>
<dbReference type="InterPro" id="IPR018223">
    <property type="entry name" value="Arginosuc_synth_CS"/>
</dbReference>
<dbReference type="InterPro" id="IPR023434">
    <property type="entry name" value="Arginosuc_synth_type_1_subfam"/>
</dbReference>
<dbReference type="InterPro" id="IPR024074">
    <property type="entry name" value="AS_cat/multimer_dom_body"/>
</dbReference>
<dbReference type="InterPro" id="IPR014729">
    <property type="entry name" value="Rossmann-like_a/b/a_fold"/>
</dbReference>
<dbReference type="NCBIfam" id="TIGR00032">
    <property type="entry name" value="argG"/>
    <property type="match status" value="1"/>
</dbReference>
<dbReference type="NCBIfam" id="NF001770">
    <property type="entry name" value="PRK00509.1"/>
    <property type="match status" value="1"/>
</dbReference>
<dbReference type="PANTHER" id="PTHR11587">
    <property type="entry name" value="ARGININOSUCCINATE SYNTHASE"/>
    <property type="match status" value="1"/>
</dbReference>
<dbReference type="PANTHER" id="PTHR11587:SF2">
    <property type="entry name" value="ARGININOSUCCINATE SYNTHASE"/>
    <property type="match status" value="1"/>
</dbReference>
<dbReference type="Pfam" id="PF20979">
    <property type="entry name" value="Arginosuc_syn_C"/>
    <property type="match status" value="1"/>
</dbReference>
<dbReference type="Pfam" id="PF00764">
    <property type="entry name" value="Arginosuc_synth"/>
    <property type="match status" value="1"/>
</dbReference>
<dbReference type="SUPFAM" id="SSF52402">
    <property type="entry name" value="Adenine nucleotide alpha hydrolases-like"/>
    <property type="match status" value="1"/>
</dbReference>
<dbReference type="SUPFAM" id="SSF69864">
    <property type="entry name" value="Argininosuccinate synthetase, C-terminal domain"/>
    <property type="match status" value="1"/>
</dbReference>
<dbReference type="PROSITE" id="PS00564">
    <property type="entry name" value="ARGININOSUCCIN_SYN_1"/>
    <property type="match status" value="1"/>
</dbReference>
<dbReference type="PROSITE" id="PS00565">
    <property type="entry name" value="ARGININOSUCCIN_SYN_2"/>
    <property type="match status" value="1"/>
</dbReference>
<feature type="chain" id="PRO_1000089022" description="Argininosuccinate synthase">
    <location>
        <begin position="1"/>
        <end position="401"/>
    </location>
</feature>
<feature type="binding site" evidence="1">
    <location>
        <begin position="9"/>
        <end position="17"/>
    </location>
    <ligand>
        <name>ATP</name>
        <dbReference type="ChEBI" id="CHEBI:30616"/>
    </ligand>
</feature>
<feature type="binding site" evidence="1">
    <location>
        <position position="86"/>
    </location>
    <ligand>
        <name>L-citrulline</name>
        <dbReference type="ChEBI" id="CHEBI:57743"/>
    </ligand>
</feature>
<feature type="binding site" evidence="1">
    <location>
        <position position="116"/>
    </location>
    <ligand>
        <name>ATP</name>
        <dbReference type="ChEBI" id="CHEBI:30616"/>
    </ligand>
</feature>
<feature type="binding site" evidence="1">
    <location>
        <position position="118"/>
    </location>
    <ligand>
        <name>L-aspartate</name>
        <dbReference type="ChEBI" id="CHEBI:29991"/>
    </ligand>
</feature>
<feature type="binding site" evidence="1">
    <location>
        <position position="122"/>
    </location>
    <ligand>
        <name>L-aspartate</name>
        <dbReference type="ChEBI" id="CHEBI:29991"/>
    </ligand>
</feature>
<feature type="binding site" evidence="1">
    <location>
        <position position="122"/>
    </location>
    <ligand>
        <name>L-citrulline</name>
        <dbReference type="ChEBI" id="CHEBI:57743"/>
    </ligand>
</feature>
<feature type="binding site" evidence="1">
    <location>
        <position position="123"/>
    </location>
    <ligand>
        <name>L-aspartate</name>
        <dbReference type="ChEBI" id="CHEBI:29991"/>
    </ligand>
</feature>
<feature type="binding site" evidence="1">
    <location>
        <position position="126"/>
    </location>
    <ligand>
        <name>L-citrulline</name>
        <dbReference type="ChEBI" id="CHEBI:57743"/>
    </ligand>
</feature>
<feature type="binding site" evidence="1">
    <location>
        <position position="174"/>
    </location>
    <ligand>
        <name>L-citrulline</name>
        <dbReference type="ChEBI" id="CHEBI:57743"/>
    </ligand>
</feature>
<feature type="binding site" evidence="1">
    <location>
        <position position="183"/>
    </location>
    <ligand>
        <name>L-citrulline</name>
        <dbReference type="ChEBI" id="CHEBI:57743"/>
    </ligand>
</feature>
<feature type="binding site" evidence="1">
    <location>
        <position position="259"/>
    </location>
    <ligand>
        <name>L-citrulline</name>
        <dbReference type="ChEBI" id="CHEBI:57743"/>
    </ligand>
</feature>
<feature type="binding site" evidence="1">
    <location>
        <position position="271"/>
    </location>
    <ligand>
        <name>L-citrulline</name>
        <dbReference type="ChEBI" id="CHEBI:57743"/>
    </ligand>
</feature>
<organism>
    <name type="scientific">Bacillus mycoides (strain KBAB4)</name>
    <name type="common">Bacillus weihenstephanensis</name>
    <dbReference type="NCBI Taxonomy" id="315730"/>
    <lineage>
        <taxon>Bacteria</taxon>
        <taxon>Bacillati</taxon>
        <taxon>Bacillota</taxon>
        <taxon>Bacilli</taxon>
        <taxon>Bacillales</taxon>
        <taxon>Bacillaceae</taxon>
        <taxon>Bacillus</taxon>
        <taxon>Bacillus cereus group</taxon>
    </lineage>
</organism>
<protein>
    <recommendedName>
        <fullName evidence="1">Argininosuccinate synthase</fullName>
        <ecNumber evidence="1">6.3.4.5</ecNumber>
    </recommendedName>
    <alternativeName>
        <fullName evidence="1">Citrulline--aspartate ligase</fullName>
    </alternativeName>
</protein>
<accession>A9VKE1</accession>
<keyword id="KW-0028">Amino-acid biosynthesis</keyword>
<keyword id="KW-0055">Arginine biosynthesis</keyword>
<keyword id="KW-0067">ATP-binding</keyword>
<keyword id="KW-0963">Cytoplasm</keyword>
<keyword id="KW-0436">Ligase</keyword>
<keyword id="KW-0547">Nucleotide-binding</keyword>
<gene>
    <name evidence="1" type="primary">argG</name>
    <name type="ordered locus">BcerKBAB4_4460</name>
</gene>
<evidence type="ECO:0000255" key="1">
    <source>
        <dbReference type="HAMAP-Rule" id="MF_00005"/>
    </source>
</evidence>
<reference key="1">
    <citation type="journal article" date="2008" name="Chem. Biol. Interact.">
        <title>Extending the Bacillus cereus group genomics to putative food-borne pathogens of different toxicity.</title>
        <authorList>
            <person name="Lapidus A."/>
            <person name="Goltsman E."/>
            <person name="Auger S."/>
            <person name="Galleron N."/>
            <person name="Segurens B."/>
            <person name="Dossat C."/>
            <person name="Land M.L."/>
            <person name="Broussolle V."/>
            <person name="Brillard J."/>
            <person name="Guinebretiere M.-H."/>
            <person name="Sanchis V."/>
            <person name="Nguen-the C."/>
            <person name="Lereclus D."/>
            <person name="Richardson P."/>
            <person name="Wincker P."/>
            <person name="Weissenbach J."/>
            <person name="Ehrlich S.D."/>
            <person name="Sorokin A."/>
        </authorList>
    </citation>
    <scope>NUCLEOTIDE SEQUENCE [LARGE SCALE GENOMIC DNA]</scope>
    <source>
        <strain>KBAB4</strain>
    </source>
</reference>